<organism>
    <name type="scientific">Human immunodeficiency virus type 1 group O (isolate MVP5180)</name>
    <name type="common">HIV-1</name>
    <dbReference type="NCBI Taxonomy" id="388816"/>
    <lineage>
        <taxon>Viruses</taxon>
        <taxon>Riboviria</taxon>
        <taxon>Pararnavirae</taxon>
        <taxon>Artverviricota</taxon>
        <taxon>Revtraviricetes</taxon>
        <taxon>Ortervirales</taxon>
        <taxon>Retroviridae</taxon>
        <taxon>Orthoretrovirinae</taxon>
        <taxon>Lentivirus</taxon>
        <taxon>Human immunodeficiency virus type 1</taxon>
    </lineage>
</organism>
<gene>
    <name evidence="1" type="primary">nef</name>
</gene>
<feature type="initiator methionine" description="Removed; by host" evidence="1">
    <location>
        <position position="1"/>
    </location>
</feature>
<feature type="chain" id="PRO_0000440996" description="Protein Nef" evidence="1">
    <location>
        <begin position="2"/>
        <end position="211"/>
    </location>
</feature>
<feature type="chain" id="PRO_0000440997" description="C-terminal core protein" evidence="1">
    <location>
        <begin position="63"/>
        <end position="211"/>
    </location>
</feature>
<feature type="region of interest" description="Disordered" evidence="2">
    <location>
        <begin position="1"/>
        <end position="38"/>
    </location>
</feature>
<feature type="region of interest" description="Acidic; interacts with host PACS1 and PACS2; stabilizes the interaction of NEF/MHC-I with host AP1M1; necessary for MHC-I internalization" evidence="1">
    <location>
        <begin position="67"/>
        <end position="70"/>
    </location>
</feature>
<feature type="region of interest" description="SH3-binding; interaction with Src family tyrosine kinases" evidence="1">
    <location>
        <begin position="74"/>
        <end position="83"/>
    </location>
</feature>
<feature type="region of interest" description="Mediates dimerization, Nef-PTE1 interaction" evidence="1">
    <location>
        <begin position="113"/>
        <end position="129"/>
    </location>
</feature>
<feature type="region of interest" description="Binding to ATP6V1H" evidence="1">
    <location>
        <begin position="153"/>
        <end position="186"/>
    </location>
</feature>
<feature type="short sequence motif" description="PxxP; stabilizes the interaction of NEF/MHC-I with host AP1M1; necessary for MHC-I internalization" evidence="1">
    <location>
        <begin position="77"/>
        <end position="80"/>
    </location>
</feature>
<feature type="short sequence motif" description="Dileucine internalization motif; necessary for CD4 internalization" evidence="1">
    <location>
        <begin position="170"/>
        <end position="171"/>
    </location>
</feature>
<feature type="short sequence motif" description="Diacidic; necessary for CD4 internalization" evidence="1">
    <location>
        <begin position="180"/>
        <end position="181"/>
    </location>
</feature>
<feature type="compositionally biased region" description="Basic and acidic residues" evidence="2">
    <location>
        <begin position="15"/>
        <end position="24"/>
    </location>
</feature>
<feature type="site" description="Might play a role in AP-1 recruitment to the Nef-MHC-I complex" evidence="1">
    <location>
        <position position="20"/>
    </location>
</feature>
<feature type="site" description="Cleavage; by viral protease" evidence="1">
    <location>
        <begin position="62"/>
        <end position="63"/>
    </location>
</feature>
<feature type="modified residue" description="Phosphoserine; by host" evidence="1">
    <location>
        <position position="6"/>
    </location>
</feature>
<feature type="lipid moiety-binding region" description="N-myristoyl glycine; by host" evidence="1">
    <location>
        <position position="2"/>
    </location>
</feature>
<evidence type="ECO:0000255" key="1">
    <source>
        <dbReference type="HAMAP-Rule" id="MF_04078"/>
    </source>
</evidence>
<evidence type="ECO:0000256" key="2">
    <source>
        <dbReference type="SAM" id="MobiDB-lite"/>
    </source>
</evidence>
<protein>
    <recommendedName>
        <fullName evidence="1">Protein Nef</fullName>
    </recommendedName>
    <alternativeName>
        <fullName evidence="1">3'ORF</fullName>
    </alternativeName>
    <alternativeName>
        <fullName evidence="1">Negative factor</fullName>
        <shortName evidence="1">F-protein</shortName>
    </alternativeName>
    <component>
        <recommendedName>
            <fullName evidence="1">C-terminal core protein</fullName>
        </recommendedName>
    </component>
</protein>
<name>NEF_HV1MV</name>
<comment type="function">
    <text evidence="1">Factor of infectivity and pathogenicity, required for optimal virus replication. Alters numerous pathways of T-lymphocyte function and down-regulates immunity surface molecules in order to evade host defense and increase viral infectivity. Alters the functionality of other immunity cells, like dendritic cells, monocytes/macrophages and NK cells.</text>
</comment>
<comment type="function">
    <text evidence="1">In infected CD4(+) T-lymphocytes, down-regulates the surface MHC-I, mature MHC-II, CD4, CD28, CCR5 and CXCR4 molecules. Mediates internalization and degradation of host CD4 through the interaction of with the cytoplasmic tail of CD4, the recruitment of AP-2 (clathrin adapter protein complex 2), internalization through clathrin coated pits, and subsequent transport to endosomes and lysosomes for degradation. Diverts host MHC-I molecules to the trans-Golgi network-associated endosomal compartments by an endocytic pathway to finally target them for degradation. MHC-I down-regulation may involve AP-1 (clathrin adapter protein complex 1) or possibly Src family kinase-ZAP70/Syk-PI3K cascade recruited by PACS2. In consequence infected cells are masked for immune recognition by cytotoxic T-lymphocytes. Decreasing the number of immune receptors also prevents reinfection by more HIV particles (superinfection). Down-regulates host SERINC3 and SERINC5 thereby excluding these proteins from the viral particles. Virion infectivity is drastically higher when SERINC3 or SERINC5 are excluded from the viral envelope, because these host antiviral proteins impair the membrane fusion event necessary for subsequent virion penetration.</text>
</comment>
<comment type="function">
    <text evidence="1">Bypasses host T-cell signaling by inducing a transcriptional program nearly identical to that of anti-CD3 cell activation. Interaction with TCR-zeta chain up-regulates the Fas ligand (FasL). Increasing surface FasL molecules and decreasing surface MHC-I molecules on infected CD4(+) cells send attacking cytotoxic CD8+ T-lymphocytes into apoptosis.</text>
</comment>
<comment type="function">
    <text evidence="1">Plays a role in optimizing the host cell environment for viral replication without causing cell death by apoptosis. Protects the infected cells from apoptosis in order to keep them alive until the next virus generation is ready to strike. Inhibits the Fas and TNFR-mediated death signals by blocking MAP3K5/ASK1. Decreases the half-life of TP53, protecting the infected cell against p53-mediated apoptosis. Inhibits the apoptotic signals regulated by the Bcl-2 family proteins through the formation of a Nef/PI3-kinase/PAK2 complex that leads to activation of PAK2 and induces phosphorylation of host BAD.</text>
</comment>
<comment type="function">
    <text evidence="1">Extracellular Nef protein targets CD4(+) T-lymphocytes for apoptosis by interacting with CXCR4 surface receptors.</text>
</comment>
<comment type="subunit">
    <text evidence="1">Monomer; cytosolic form. Homodimer; membrane bound form. Interacts with Nef associated p21-activated kinase (PAK2); this interaction activates PAK2. Associates with the Nef-MHC-I-AP1 complex; this complex is required for MHC-I internalization. Interacts (via C-terminus) with host PI3-kinase. Interacts with host PACS1; this interaction seems to be weak. Interacts with host PACS2. Interacts with host LCK and MAPK3; these interactions inhibit the kinase activity of the latter. Interacts with host ATP6V1H; this interaction may play a role in CD4 endocytosis. Associates with the CD4-Nef-AP2 complex; this complex is required for CD4 internalization. Interacts with host AP2 subunit alpha and AP2 subunit sigma2. Interacts with TCR-zeta chain; this interaction up-regulates the Fas ligand (FasL) surface expression. Interacts with host HCK, LYN, and SRC; these interactions activate the Src family kinases. Interacts with MAP3K5; this interaction inhibits the Fas and TNFR-mediated death signals. Interacts with beta-COP and PTE1. Interacts with human RACK1; this increases Nef phosphorylation by PKC. Interacts with TP53; this interaction decreases the half-life of TP53, protecting the infected cell against p53-mediated apoptosis.</text>
</comment>
<comment type="subcellular location">
    <subcellularLocation>
        <location evidence="1">Host cell membrane</location>
        <topology evidence="1">Lipid-anchor</topology>
        <orientation evidence="1">Cytoplasmic side</orientation>
    </subcellularLocation>
    <subcellularLocation>
        <location evidence="1">Virion</location>
    </subcellularLocation>
    <subcellularLocation>
        <location evidence="1">Secreted</location>
    </subcellularLocation>
    <subcellularLocation>
        <location evidence="1">Host Golgi apparatus membrane</location>
    </subcellularLocation>
    <text evidence="1">TGN localization requires PACS1. Associates with the inner plasma membrane through its N-terminal domain. Nef stimulates its own export via the release of exosomes. Incorporated in virions at a rate of about 10 molecules per virion, where it is cleaved.</text>
</comment>
<comment type="induction">
    <text evidence="1">Expressed early in the viral replication cycle.</text>
</comment>
<comment type="domain">
    <text evidence="1">The N-terminal domain is composed of the N-myristoyl glycine and of a cluster of positively charged amino acids. It is required for inner plasma membrane targeting of Nef and virion incorporation, and thereby for infectivity. This domain is also involved in binding to TP53.</text>
</comment>
<comment type="domain">
    <text evidence="1">The SH3-binding domain constituted of PxxP motifs mediates binding to several Src family proteins thereby regulating their tyrosine kinase activity. The same motifs also mediates the association with MAPK3, PI3-kinase and TCR-zeta.</text>
</comment>
<comment type="domain">
    <text evidence="1">The dileucine internalization motif and a diacidic motif seem to be required for binding to AP-2.</text>
</comment>
<comment type="domain">
    <text evidence="1">The acidic region binds to the sorting protein PACS-2, which targets Nef to the paranuclear region, enabling the PxxP motif to direct assembly of an SFK/ZAP-70/PI3K complex that accelerates endocytosis of cell-surface MHC-I.</text>
</comment>
<comment type="PTM">
    <text evidence="1">The virion-associated Nef proteins are cleaved by the viral protease to release the soluble C-terminal core protein. Nef is probably cleaved concomitantly with viral structural proteins on maturation of virus particles.</text>
</comment>
<comment type="PTM">
    <text evidence="1">Myristoylated.</text>
</comment>
<comment type="PTM">
    <text evidence="1">Phosphorylated on serine residues, probably by host PKCdelta and theta.</text>
</comment>
<comment type="miscellaneous">
    <text evidence="1">HIV-1 lineages are divided in three main groups, M (for Major), O (for Outlier), and N (for New, or Non-M, Non-O). The vast majority of strains found worldwide belong to the group M. Group O seems to be endemic to and largely confined to Cameroon and neighboring countries in West Central Africa, where these viruses represent a small minority of HIV-1 strains. The group N is represented by a limited number of isolates from Cameroonian persons. The group M is further subdivided in 9 clades or subtypes (A to D, F to H, J and K).</text>
</comment>
<comment type="similarity">
    <text evidence="1">Belongs to the lentivirus primate group Nef protein family.</text>
</comment>
<keyword id="KW-0014">AIDS</keyword>
<keyword id="KW-0053">Apoptosis</keyword>
<keyword id="KW-0244">Early protein</keyword>
<keyword id="KW-1032">Host cell membrane</keyword>
<keyword id="KW-1040">Host Golgi apparatus</keyword>
<keyword id="KW-1043">Host membrane</keyword>
<keyword id="KW-0945">Host-virus interaction</keyword>
<keyword id="KW-1080">Inhibition of host adaptive immune response by virus</keyword>
<keyword id="KW-1083">Inhibition of host autophagy by virus</keyword>
<keyword id="KW-1115">Inhibition of host MHC class I molecule presentation by virus</keyword>
<keyword id="KW-1116">Inhibition of host MHC class II molecule presentation by virus</keyword>
<keyword id="KW-0449">Lipoprotein</keyword>
<keyword id="KW-0472">Membrane</keyword>
<keyword id="KW-0519">Myristate</keyword>
<keyword id="KW-0597">Phosphoprotein</keyword>
<keyword id="KW-0964">Secreted</keyword>
<keyword id="KW-0729">SH3-binding</keyword>
<keyword id="KW-0899">Viral immunoevasion</keyword>
<keyword id="KW-0946">Virion</keyword>
<keyword id="KW-0843">Virulence</keyword>
<accession>Q79671</accession>
<organismHost>
    <name type="scientific">Homo sapiens</name>
    <name type="common">Human</name>
    <dbReference type="NCBI Taxonomy" id="9606"/>
</organismHost>
<dbReference type="EMBL" id="L20571">
    <property type="protein sequence ID" value="AAA44865.1"/>
    <property type="molecule type" value="Genomic_RNA"/>
</dbReference>
<dbReference type="SMR" id="Q79671"/>
<dbReference type="Proteomes" id="UP000007698">
    <property type="component" value="Segment"/>
</dbReference>
<dbReference type="GO" id="GO:0005576">
    <property type="term" value="C:extracellular region"/>
    <property type="evidence" value="ECO:0007669"/>
    <property type="project" value="UniProtKB-SubCell"/>
</dbReference>
<dbReference type="GO" id="GO:0044178">
    <property type="term" value="C:host cell Golgi membrane"/>
    <property type="evidence" value="ECO:0007669"/>
    <property type="project" value="UniProtKB-SubCell"/>
</dbReference>
<dbReference type="GO" id="GO:0020002">
    <property type="term" value="C:host cell plasma membrane"/>
    <property type="evidence" value="ECO:0007669"/>
    <property type="project" value="UniProtKB-SubCell"/>
</dbReference>
<dbReference type="GO" id="GO:0016020">
    <property type="term" value="C:membrane"/>
    <property type="evidence" value="ECO:0007669"/>
    <property type="project" value="UniProtKB-UniRule"/>
</dbReference>
<dbReference type="GO" id="GO:0044423">
    <property type="term" value="C:virion component"/>
    <property type="evidence" value="ECO:0007669"/>
    <property type="project" value="UniProtKB-UniRule"/>
</dbReference>
<dbReference type="GO" id="GO:0005525">
    <property type="term" value="F:GTP binding"/>
    <property type="evidence" value="ECO:0007669"/>
    <property type="project" value="UniProtKB-UniRule"/>
</dbReference>
<dbReference type="GO" id="GO:0017124">
    <property type="term" value="F:SH3 domain binding"/>
    <property type="evidence" value="ECO:0007669"/>
    <property type="project" value="UniProtKB-UniRule"/>
</dbReference>
<dbReference type="GO" id="GO:0046776">
    <property type="term" value="P:symbiont-mediated suppression of host antigen processing and presentation of peptide antigen via MHC class I"/>
    <property type="evidence" value="ECO:0007669"/>
    <property type="project" value="UniProtKB-UniRule"/>
</dbReference>
<dbReference type="GO" id="GO:0039505">
    <property type="term" value="P:symbiont-mediated suppression of host antigen processing and presentation of peptide antigen via MHC class II"/>
    <property type="evidence" value="ECO:0007669"/>
    <property type="project" value="UniProtKB-UniRule"/>
</dbReference>
<dbReference type="GO" id="GO:0140321">
    <property type="term" value="P:symbiont-mediated suppression of host autophagy"/>
    <property type="evidence" value="ECO:0007669"/>
    <property type="project" value="UniProtKB-KW"/>
</dbReference>
<dbReference type="Gene3D" id="4.10.890.10">
    <property type="entry name" value="HIV 1 nef anchor domain"/>
    <property type="match status" value="1"/>
</dbReference>
<dbReference type="Gene3D" id="3.30.62.10">
    <property type="entry name" value="Nef Regulatory Factor"/>
    <property type="match status" value="1"/>
</dbReference>
<dbReference type="HAMAP" id="MF_04078">
    <property type="entry name" value="NEF_HIV"/>
    <property type="match status" value="1"/>
</dbReference>
<dbReference type="InterPro" id="IPR027480">
    <property type="entry name" value="HIV-1_Nef_anchor_sf"/>
</dbReference>
<dbReference type="InterPro" id="IPR027481">
    <property type="entry name" value="HIV-1_Nef_core_sf"/>
</dbReference>
<dbReference type="InterPro" id="IPR001558">
    <property type="entry name" value="HIV_Nef"/>
</dbReference>
<dbReference type="Pfam" id="PF00469">
    <property type="entry name" value="F-protein"/>
    <property type="match status" value="1"/>
</dbReference>
<dbReference type="SUPFAM" id="SSF55671">
    <property type="entry name" value="Regulatory factor Nef"/>
    <property type="match status" value="1"/>
</dbReference>
<reference key="1">
    <citation type="journal article" date="1994" name="J. Virol.">
        <title>A new subtype of human immunodeficiency virus type 1 (MVP-5180) from Cameroon.</title>
        <authorList>
            <person name="Gurtler L.G."/>
            <person name="Hauser P.H."/>
            <person name="Eberle J."/>
            <person name="von Brunn A."/>
            <person name="Knapp S."/>
            <person name="Zekeng L."/>
            <person name="Tsague J.M."/>
            <person name="Kaptue L."/>
        </authorList>
    </citation>
    <scope>NUCLEOTIDE SEQUENCE [GENOMIC RNA]</scope>
</reference>
<sequence>MGNAWSKSKFAGWSEVRDRMRRSSSDPQQPCAPGVGAVSRELATRGGISSSHTPQNNAALAFLDSHKDEDVGFPVRPQVPLRPMTFKAAFDLSFFLKEKGGLDGLIYSHKRAEILDLWIYHTQGFFPDWQCYTPGPGPRFPLTFGWLFKLVPVSAEEAERLGNTNEDASLLHPACNHGAEDAHGEILKWQFDRSLGLTHIALQKHPELFPK</sequence>
<proteinExistence type="inferred from homology"/>